<comment type="similarity">
    <text evidence="1">Belongs to the UPF0502 family.</text>
</comment>
<feature type="chain" id="PRO_0000309408" description="UPF0502 protein PSPPH_2577">
    <location>
        <begin position="1"/>
        <end position="220"/>
    </location>
</feature>
<dbReference type="EMBL" id="CP000058">
    <property type="protein sequence ID" value="AAZ37070.1"/>
    <property type="molecule type" value="Genomic_DNA"/>
</dbReference>
<dbReference type="RefSeq" id="WP_011168664.1">
    <property type="nucleotide sequence ID" value="NC_005773.3"/>
</dbReference>
<dbReference type="SMR" id="Q48IK9"/>
<dbReference type="KEGG" id="psp:PSPPH_2577"/>
<dbReference type="eggNOG" id="COG3132">
    <property type="taxonomic scope" value="Bacteria"/>
</dbReference>
<dbReference type="HOGENOM" id="CLU_057831_2_0_6"/>
<dbReference type="Proteomes" id="UP000000551">
    <property type="component" value="Chromosome"/>
</dbReference>
<dbReference type="Gene3D" id="1.10.10.10">
    <property type="entry name" value="Winged helix-like DNA-binding domain superfamily/Winged helix DNA-binding domain"/>
    <property type="match status" value="2"/>
</dbReference>
<dbReference type="HAMAP" id="MF_01584">
    <property type="entry name" value="UPF0502"/>
    <property type="match status" value="1"/>
</dbReference>
<dbReference type="InterPro" id="IPR007432">
    <property type="entry name" value="DUF480"/>
</dbReference>
<dbReference type="InterPro" id="IPR036388">
    <property type="entry name" value="WH-like_DNA-bd_sf"/>
</dbReference>
<dbReference type="InterPro" id="IPR036390">
    <property type="entry name" value="WH_DNA-bd_sf"/>
</dbReference>
<dbReference type="PANTHER" id="PTHR38768">
    <property type="entry name" value="UPF0502 PROTEIN YCEH"/>
    <property type="match status" value="1"/>
</dbReference>
<dbReference type="PANTHER" id="PTHR38768:SF1">
    <property type="entry name" value="UPF0502 PROTEIN YCEH"/>
    <property type="match status" value="1"/>
</dbReference>
<dbReference type="Pfam" id="PF04337">
    <property type="entry name" value="DUF480"/>
    <property type="match status" value="1"/>
</dbReference>
<dbReference type="SUPFAM" id="SSF46785">
    <property type="entry name" value="Winged helix' DNA-binding domain"/>
    <property type="match status" value="2"/>
</dbReference>
<proteinExistence type="inferred from homology"/>
<gene>
    <name type="ordered locus">PSPPH_2577</name>
</gene>
<name>Y2577_PSE14</name>
<reference key="1">
    <citation type="journal article" date="2005" name="J. Bacteriol.">
        <title>Whole-genome sequence analysis of Pseudomonas syringae pv. phaseolicola 1448A reveals divergence among pathovars in genes involved in virulence and transposition.</title>
        <authorList>
            <person name="Joardar V."/>
            <person name="Lindeberg M."/>
            <person name="Jackson R.W."/>
            <person name="Selengut J."/>
            <person name="Dodson R."/>
            <person name="Brinkac L.M."/>
            <person name="Daugherty S.C."/>
            <person name="DeBoy R.T."/>
            <person name="Durkin A.S."/>
            <person name="Gwinn Giglio M."/>
            <person name="Madupu R."/>
            <person name="Nelson W.C."/>
            <person name="Rosovitz M.J."/>
            <person name="Sullivan S.A."/>
            <person name="Crabtree J."/>
            <person name="Creasy T."/>
            <person name="Davidsen T.M."/>
            <person name="Haft D.H."/>
            <person name="Zafar N."/>
            <person name="Zhou L."/>
            <person name="Halpin R."/>
            <person name="Holley T."/>
            <person name="Khouri H.M."/>
            <person name="Feldblyum T.V."/>
            <person name="White O."/>
            <person name="Fraser C.M."/>
            <person name="Chatterjee A.K."/>
            <person name="Cartinhour S."/>
            <person name="Schneider D."/>
            <person name="Mansfield J.W."/>
            <person name="Collmer A."/>
            <person name="Buell R."/>
        </authorList>
    </citation>
    <scope>NUCLEOTIDE SEQUENCE [LARGE SCALE GENOMIC DNA]</scope>
    <source>
        <strain>1448A / Race 6</strain>
    </source>
</reference>
<evidence type="ECO:0000255" key="1">
    <source>
        <dbReference type="HAMAP-Rule" id="MF_01584"/>
    </source>
</evidence>
<sequence length="220" mass="24406">MSIESSSSESSPNADALHLNSSEVRVLGCLIEKQATNPETYPLTLNALVLACNQKTSRDPVMSLTPGQVGQSLRALEGRGLTRLVMGSRADRWEHRVDKAVELVPAQVILTGLLLLRGPQTVSELLTRSHRMHDFEDSEQLIHQLERLIARGLAMLAPRQSGQREDRYTHLLGDPDDLQELLAARQHAPERNAANPAASQRFDELEARVAALEERLARLE</sequence>
<organism>
    <name type="scientific">Pseudomonas savastanoi pv. phaseolicola (strain 1448A / Race 6)</name>
    <name type="common">Pseudomonas syringae pv. phaseolicola (strain 1448A / Race 6)</name>
    <dbReference type="NCBI Taxonomy" id="264730"/>
    <lineage>
        <taxon>Bacteria</taxon>
        <taxon>Pseudomonadati</taxon>
        <taxon>Pseudomonadota</taxon>
        <taxon>Gammaproteobacteria</taxon>
        <taxon>Pseudomonadales</taxon>
        <taxon>Pseudomonadaceae</taxon>
        <taxon>Pseudomonas</taxon>
    </lineage>
</organism>
<protein>
    <recommendedName>
        <fullName evidence="1">UPF0502 protein PSPPH_2577</fullName>
    </recommendedName>
</protein>
<accession>Q48IK9</accession>